<organism>
    <name type="scientific">Mycobacterium tuberculosis (strain ATCC 25618 / H37Rv)</name>
    <dbReference type="NCBI Taxonomy" id="83332"/>
    <lineage>
        <taxon>Bacteria</taxon>
        <taxon>Bacillati</taxon>
        <taxon>Actinomycetota</taxon>
        <taxon>Actinomycetes</taxon>
        <taxon>Mycobacteriales</taxon>
        <taxon>Mycobacteriaceae</taxon>
        <taxon>Mycobacterium</taxon>
        <taxon>Mycobacterium tuberculosis complex</taxon>
    </lineage>
</organism>
<evidence type="ECO:0000255" key="1">
    <source>
        <dbReference type="HAMAP-Rule" id="MF_00051"/>
    </source>
</evidence>
<evidence type="ECO:0000269" key="2">
    <source>
    </source>
</evidence>
<evidence type="ECO:0000269" key="3">
    <source>
    </source>
</evidence>
<evidence type="ECO:0000269" key="4">
    <source ref="5"/>
</evidence>
<evidence type="ECO:0000303" key="5">
    <source>
    </source>
</evidence>
<evidence type="ECO:0000305" key="6"/>
<evidence type="ECO:0000305" key="7">
    <source>
    </source>
</evidence>
<evidence type="ECO:0007829" key="8">
    <source>
        <dbReference type="PDB" id="3H7F"/>
    </source>
</evidence>
<accession>P9WGI9</accession>
<accession>L0T5T8</accession>
<accession>O53441</accession>
<name>GLYA1_MYCTU</name>
<keyword id="KW-0002">3D-structure</keyword>
<keyword id="KW-0028">Amino-acid biosynthesis</keyword>
<keyword id="KW-0963">Cytoplasm</keyword>
<keyword id="KW-0903">Direct protein sequencing</keyword>
<keyword id="KW-0554">One-carbon metabolism</keyword>
<keyword id="KW-0663">Pyridoxal phosphate</keyword>
<keyword id="KW-1185">Reference proteome</keyword>
<keyword id="KW-0808">Transferase</keyword>
<protein>
    <recommendedName>
        <fullName evidence="1">Serine hydroxymethyltransferase 1</fullName>
        <shortName evidence="5">SHM1</shortName>
        <shortName evidence="1">SHMT 1</shortName>
        <shortName evidence="1">Serine methylase 1</shortName>
        <ecNumber evidence="1 2">2.1.2.1</ecNumber>
    </recommendedName>
</protein>
<dbReference type="EC" id="2.1.2.1" evidence="1 2"/>
<dbReference type="EMBL" id="AL123456">
    <property type="protein sequence ID" value="CCP43846.1"/>
    <property type="status" value="ALT_INIT"/>
    <property type="molecule type" value="Genomic_DNA"/>
</dbReference>
<dbReference type="PIR" id="C70896">
    <property type="entry name" value="C70896"/>
</dbReference>
<dbReference type="RefSeq" id="YP_177787.3">
    <property type="nucleotide sequence ID" value="NC_000962.3"/>
</dbReference>
<dbReference type="PDB" id="3H7F">
    <property type="method" value="X-ray"/>
    <property type="resolution" value="1.50 A"/>
    <property type="chains" value="A/B=13-438"/>
</dbReference>
<dbReference type="PDBsum" id="3H7F"/>
<dbReference type="SMR" id="P9WGI9"/>
<dbReference type="FunCoup" id="P9WGI9">
    <property type="interactions" value="642"/>
</dbReference>
<dbReference type="STRING" id="83332.Rv1093"/>
<dbReference type="PaxDb" id="83332-Rv1093"/>
<dbReference type="DNASU" id="885338"/>
<dbReference type="GeneID" id="885338"/>
<dbReference type="KEGG" id="mtu:Rv1093"/>
<dbReference type="TubercuList" id="Rv1093"/>
<dbReference type="eggNOG" id="COG0112">
    <property type="taxonomic scope" value="Bacteria"/>
</dbReference>
<dbReference type="InParanoid" id="P9WGI9"/>
<dbReference type="OrthoDB" id="9803846at2"/>
<dbReference type="BRENDA" id="2.1.2.1">
    <property type="organism ID" value="3445"/>
</dbReference>
<dbReference type="UniPathway" id="UPA00193"/>
<dbReference type="UniPathway" id="UPA00288">
    <property type="reaction ID" value="UER01023"/>
</dbReference>
<dbReference type="EvolutionaryTrace" id="P9WGI9"/>
<dbReference type="PHI-base" id="PHI:7584"/>
<dbReference type="Proteomes" id="UP000001584">
    <property type="component" value="Chromosome"/>
</dbReference>
<dbReference type="GO" id="GO:0005737">
    <property type="term" value="C:cytoplasm"/>
    <property type="evidence" value="ECO:0000318"/>
    <property type="project" value="GO_Central"/>
</dbReference>
<dbReference type="GO" id="GO:0005829">
    <property type="term" value="C:cytosol"/>
    <property type="evidence" value="ECO:0000318"/>
    <property type="project" value="GO_Central"/>
</dbReference>
<dbReference type="GO" id="GO:0009274">
    <property type="term" value="C:peptidoglycan-based cell wall"/>
    <property type="evidence" value="ECO:0007005"/>
    <property type="project" value="MTBBASE"/>
</dbReference>
<dbReference type="GO" id="GO:0005886">
    <property type="term" value="C:plasma membrane"/>
    <property type="evidence" value="ECO:0007005"/>
    <property type="project" value="MTBBASE"/>
</dbReference>
<dbReference type="GO" id="GO:0004372">
    <property type="term" value="F:glycine hydroxymethyltransferase activity"/>
    <property type="evidence" value="ECO:0000314"/>
    <property type="project" value="MTBBASE"/>
</dbReference>
<dbReference type="GO" id="GO:0042803">
    <property type="term" value="F:protein homodimerization activity"/>
    <property type="evidence" value="ECO:0000353"/>
    <property type="project" value="MTBBASE"/>
</dbReference>
<dbReference type="GO" id="GO:0030170">
    <property type="term" value="F:pyridoxal phosphate binding"/>
    <property type="evidence" value="ECO:0000314"/>
    <property type="project" value="MTBBASE"/>
</dbReference>
<dbReference type="GO" id="GO:0019264">
    <property type="term" value="P:glycine biosynthetic process from serine"/>
    <property type="evidence" value="ECO:0000318"/>
    <property type="project" value="GO_Central"/>
</dbReference>
<dbReference type="GO" id="GO:0006544">
    <property type="term" value="P:glycine metabolic process"/>
    <property type="evidence" value="ECO:0000314"/>
    <property type="project" value="MTBBASE"/>
</dbReference>
<dbReference type="GO" id="GO:0006563">
    <property type="term" value="P:L-serine metabolic process"/>
    <property type="evidence" value="ECO:0000314"/>
    <property type="project" value="MTBBASE"/>
</dbReference>
<dbReference type="GO" id="GO:0042783">
    <property type="term" value="P:symbiont-mediated evasion of host immune response"/>
    <property type="evidence" value="ECO:0000315"/>
    <property type="project" value="MTBBASE"/>
</dbReference>
<dbReference type="GO" id="GO:0035999">
    <property type="term" value="P:tetrahydrofolate interconversion"/>
    <property type="evidence" value="ECO:0007669"/>
    <property type="project" value="UniProtKB-UniRule"/>
</dbReference>
<dbReference type="GO" id="GO:0046653">
    <property type="term" value="P:tetrahydrofolate metabolic process"/>
    <property type="evidence" value="ECO:0000318"/>
    <property type="project" value="GO_Central"/>
</dbReference>
<dbReference type="CDD" id="cd00378">
    <property type="entry name" value="SHMT"/>
    <property type="match status" value="1"/>
</dbReference>
<dbReference type="FunFam" id="3.40.640.10:FF:000001">
    <property type="entry name" value="Serine hydroxymethyltransferase"/>
    <property type="match status" value="1"/>
</dbReference>
<dbReference type="Gene3D" id="3.90.1150.10">
    <property type="entry name" value="Aspartate Aminotransferase, domain 1"/>
    <property type="match status" value="1"/>
</dbReference>
<dbReference type="Gene3D" id="3.40.640.10">
    <property type="entry name" value="Type I PLP-dependent aspartate aminotransferase-like (Major domain)"/>
    <property type="match status" value="1"/>
</dbReference>
<dbReference type="HAMAP" id="MF_00051">
    <property type="entry name" value="SHMT"/>
    <property type="match status" value="1"/>
</dbReference>
<dbReference type="InterPro" id="IPR015424">
    <property type="entry name" value="PyrdxlP-dep_Trfase"/>
</dbReference>
<dbReference type="InterPro" id="IPR015421">
    <property type="entry name" value="PyrdxlP-dep_Trfase_major"/>
</dbReference>
<dbReference type="InterPro" id="IPR015422">
    <property type="entry name" value="PyrdxlP-dep_Trfase_small"/>
</dbReference>
<dbReference type="InterPro" id="IPR001085">
    <property type="entry name" value="Ser_HO-MeTrfase"/>
</dbReference>
<dbReference type="InterPro" id="IPR049943">
    <property type="entry name" value="Ser_HO-MeTrfase-like"/>
</dbReference>
<dbReference type="InterPro" id="IPR019798">
    <property type="entry name" value="Ser_HO-MeTrfase_PLP_BS"/>
</dbReference>
<dbReference type="InterPro" id="IPR039429">
    <property type="entry name" value="SHMT-like_dom"/>
</dbReference>
<dbReference type="NCBIfam" id="NF000586">
    <property type="entry name" value="PRK00011.1"/>
    <property type="match status" value="1"/>
</dbReference>
<dbReference type="PANTHER" id="PTHR11680">
    <property type="entry name" value="SERINE HYDROXYMETHYLTRANSFERASE"/>
    <property type="match status" value="1"/>
</dbReference>
<dbReference type="PANTHER" id="PTHR11680:SF35">
    <property type="entry name" value="SERINE HYDROXYMETHYLTRANSFERASE 1"/>
    <property type="match status" value="1"/>
</dbReference>
<dbReference type="Pfam" id="PF00464">
    <property type="entry name" value="SHMT"/>
    <property type="match status" value="1"/>
</dbReference>
<dbReference type="PIRSF" id="PIRSF000412">
    <property type="entry name" value="SHMT"/>
    <property type="match status" value="1"/>
</dbReference>
<dbReference type="SUPFAM" id="SSF53383">
    <property type="entry name" value="PLP-dependent transferases"/>
    <property type="match status" value="1"/>
</dbReference>
<dbReference type="PROSITE" id="PS00096">
    <property type="entry name" value="SHMT"/>
    <property type="match status" value="1"/>
</dbReference>
<reference key="1">
    <citation type="journal article" date="1998" name="Nature">
        <title>Deciphering the biology of Mycobacterium tuberculosis from the complete genome sequence.</title>
        <authorList>
            <person name="Cole S.T."/>
            <person name="Brosch R."/>
            <person name="Parkhill J."/>
            <person name="Garnier T."/>
            <person name="Churcher C.M."/>
            <person name="Harris D.E."/>
            <person name="Gordon S.V."/>
            <person name="Eiglmeier K."/>
            <person name="Gas S."/>
            <person name="Barry C.E. III"/>
            <person name="Tekaia F."/>
            <person name="Badcock K."/>
            <person name="Basham D."/>
            <person name="Brown D."/>
            <person name="Chillingworth T."/>
            <person name="Connor R."/>
            <person name="Davies R.M."/>
            <person name="Devlin K."/>
            <person name="Feltwell T."/>
            <person name="Gentles S."/>
            <person name="Hamlin N."/>
            <person name="Holroyd S."/>
            <person name="Hornsby T."/>
            <person name="Jagels K."/>
            <person name="Krogh A."/>
            <person name="McLean J."/>
            <person name="Moule S."/>
            <person name="Murphy L.D."/>
            <person name="Oliver S."/>
            <person name="Osborne J."/>
            <person name="Quail M.A."/>
            <person name="Rajandream M.A."/>
            <person name="Rogers J."/>
            <person name="Rutter S."/>
            <person name="Seeger K."/>
            <person name="Skelton S."/>
            <person name="Squares S."/>
            <person name="Squares R."/>
            <person name="Sulston J.E."/>
            <person name="Taylor K."/>
            <person name="Whitehead S."/>
            <person name="Barrell B.G."/>
        </authorList>
    </citation>
    <scope>NUCLEOTIDE SEQUENCE [LARGE SCALE GENOMIC DNA]</scope>
    <source>
        <strain>ATCC 25618 / H37Rv</strain>
    </source>
</reference>
<reference key="2">
    <citation type="journal article" date="2022" name="Genomics">
        <title>Deep N-terminomics of Mycobacterium tuberculosis H37Rv extensively correct annotated encoding genes.</title>
        <authorList>
            <person name="Shi J."/>
            <person name="Meng S."/>
            <person name="Wan L."/>
            <person name="Zhang Z."/>
            <person name="Jiang S."/>
            <person name="Zhu H."/>
            <person name="Dai E."/>
            <person name="Chang L."/>
            <person name="Gao H."/>
            <person name="Wan K."/>
            <person name="Zhang L."/>
            <person name="Zhao X."/>
            <person name="Liu H."/>
            <person name="Lyu Z."/>
            <person name="Zhang Y."/>
            <person name="Xu P."/>
        </authorList>
    </citation>
    <scope>PROTEIN SEQUENCE OF 9-30</scope>
    <scope>SEQUENCE REVISION TO N-TERMINUS</scope>
    <source>
        <strain>H37Rv</strain>
    </source>
</reference>
<reference key="3">
    <citation type="journal article" date="2003" name="J. Biol. Chem.">
        <title>Unusual structural, functional, and stability properties of serine hydroxymethyltransferase from Mycobacterium tuberculosis.</title>
        <authorList>
            <person name="Chaturvedi S."/>
            <person name="Bhakuni V."/>
        </authorList>
    </citation>
    <scope>FUNCTION</scope>
    <scope>CATALYTIC ACTIVITY</scope>
    <scope>SERINE HYDROXYMETHYLTRANSFERASE ACTIVITY</scope>
    <scope>ALDOLASE ACTIVITY</scope>
    <scope>COFACTOR</scope>
    <scope>STOICHIOMETRY OF PLP</scope>
    <scope>PH DEPENDENCE</scope>
    <scope>SUBCELLULAR LOCATION</scope>
    <scope>SUBUNIT</scope>
</reference>
<reference key="4">
    <citation type="journal article" date="2011" name="Mol. Cell. Proteomics">
        <title>Proteogenomic analysis of Mycobacterium tuberculosis by high resolution mass spectrometry.</title>
        <authorList>
            <person name="Kelkar D.S."/>
            <person name="Kumar D."/>
            <person name="Kumar P."/>
            <person name="Balakrishnan L."/>
            <person name="Muthusamy B."/>
            <person name="Yadav A.K."/>
            <person name="Shrivastava P."/>
            <person name="Marimuthu A."/>
            <person name="Anand S."/>
            <person name="Sundaram H."/>
            <person name="Kingsbury R."/>
            <person name="Harsha H.C."/>
            <person name="Nair B."/>
            <person name="Prasad T.S."/>
            <person name="Chauhan D.S."/>
            <person name="Katoch K."/>
            <person name="Katoch V.M."/>
            <person name="Kumar P."/>
            <person name="Chaerkady R."/>
            <person name="Ramachandran S."/>
            <person name="Dash D."/>
            <person name="Pandey A."/>
        </authorList>
    </citation>
    <scope>IDENTIFICATION BY MASS SPECTROMETRY [LARGE SCALE ANALYSIS]</scope>
    <source>
        <strain>ATCC 25618 / H37Rv</strain>
    </source>
</reference>
<reference key="5">
    <citation type="submission" date="2009-04" db="PDB data bank">
        <title>Crystal structure of serine hydroxymethyltransferase from Mycobacterium tuberculosis.</title>
        <authorList>
            <consortium name="Seattle structural genomics center for infectious disease (SSGCID)"/>
        </authorList>
    </citation>
    <scope>X-RAY CRYSTALLOGRAPHY (1.50 ANGSTROMS) OF 13-438</scope>
    <scope>SUBUNIT</scope>
</reference>
<sequence length="438" mass="46216">MTAAPDARTTAVMSAPLAEVDPDIAELLAKELGRQRDTLEMIASENFVPRAVLQAQGSVLTNKYAEGLPGRRYYGGCEHVDVVENLARDRAKALFGAEFANVQPHSGAQANAAVLHALMSPGERLLGLDLANGGHLTHGMRLNFSGKLYENGFYGVDPATHLIDMDAVRATALEFRPKVIIAGWSAYPRVLDFAAFRSIADEVGAKLLVDMAHFAGLVAAGLHPSPVPHADVVSTTVHKTLGGGRSGLIVGKQQYAKAINSAVFPGQQGGPLMHVIAGKAVALKIAATPEFADRQRRTLSGARIIADRLMAPDVAKAGVSVVSGGTDVHLVLVDLRDSPLDGQAAEDLLHEVGITVNRNAVPNDPRPPMVTSGLRIGTPALATRGFGDTEFTEVADIIATALATGSSVDVSALKDRATRLARAFPLYDGLEEWSLVGR</sequence>
<feature type="chain" id="PRO_0000113618" description="Serine hydroxymethyltransferase 1">
    <location>
        <begin position="1"/>
        <end position="438"/>
    </location>
</feature>
<feature type="binding site" evidence="1">
    <location>
        <position position="130"/>
    </location>
    <ligand>
        <name>(6S)-5,6,7,8-tetrahydrofolate</name>
        <dbReference type="ChEBI" id="CHEBI:57453"/>
    </ligand>
</feature>
<feature type="binding site" evidence="1">
    <location>
        <begin position="134"/>
        <end position="136"/>
    </location>
    <ligand>
        <name>(6S)-5,6,7,8-tetrahydrofolate</name>
        <dbReference type="ChEBI" id="CHEBI:57453"/>
    </ligand>
</feature>
<feature type="site" description="Plays an important role in substrate specificity" evidence="1">
    <location>
        <position position="238"/>
    </location>
</feature>
<feature type="modified residue" description="N6-(pyridoxal phosphate)lysine" evidence="1">
    <location>
        <position position="239"/>
    </location>
</feature>
<feature type="helix" evidence="8">
    <location>
        <begin position="17"/>
        <end position="20"/>
    </location>
</feature>
<feature type="helix" evidence="8">
    <location>
        <begin position="22"/>
        <end position="37"/>
    </location>
</feature>
<feature type="strand" evidence="8">
    <location>
        <begin position="38"/>
        <end position="40"/>
    </location>
</feature>
<feature type="helix" evidence="8">
    <location>
        <begin position="50"/>
        <end position="56"/>
    </location>
</feature>
<feature type="helix" evidence="8">
    <location>
        <begin position="59"/>
        <end position="62"/>
    </location>
</feature>
<feature type="strand" evidence="8">
    <location>
        <begin position="71"/>
        <end position="75"/>
    </location>
</feature>
<feature type="helix" evidence="8">
    <location>
        <begin position="78"/>
        <end position="95"/>
    </location>
</feature>
<feature type="strand" evidence="8">
    <location>
        <begin position="98"/>
        <end position="101"/>
    </location>
</feature>
<feature type="helix" evidence="8">
    <location>
        <begin position="107"/>
        <end position="118"/>
    </location>
</feature>
<feature type="strand" evidence="8">
    <location>
        <begin position="124"/>
        <end position="128"/>
    </location>
</feature>
<feature type="helix" evidence="8">
    <location>
        <begin position="130"/>
        <end position="132"/>
    </location>
</feature>
<feature type="helix" evidence="8">
    <location>
        <begin position="136"/>
        <end position="138"/>
    </location>
</feature>
<feature type="helix" evidence="8">
    <location>
        <begin position="144"/>
        <end position="147"/>
    </location>
</feature>
<feature type="strand" evidence="8">
    <location>
        <begin position="148"/>
        <end position="154"/>
    </location>
</feature>
<feature type="turn" evidence="8">
    <location>
        <begin position="158"/>
        <end position="160"/>
    </location>
</feature>
<feature type="helix" evidence="8">
    <location>
        <begin position="165"/>
        <end position="175"/>
    </location>
</feature>
<feature type="strand" evidence="8">
    <location>
        <begin position="178"/>
        <end position="183"/>
    </location>
</feature>
<feature type="helix" evidence="8">
    <location>
        <begin position="193"/>
        <end position="203"/>
    </location>
</feature>
<feature type="strand" evidence="8">
    <location>
        <begin position="206"/>
        <end position="210"/>
    </location>
</feature>
<feature type="turn" evidence="8">
    <location>
        <begin position="212"/>
        <end position="214"/>
    </location>
</feature>
<feature type="helix" evidence="8">
    <location>
        <begin position="215"/>
        <end position="219"/>
    </location>
</feature>
<feature type="turn" evidence="8">
    <location>
        <begin position="227"/>
        <end position="229"/>
    </location>
</feature>
<feature type="strand" evidence="8">
    <location>
        <begin position="231"/>
        <end position="236"/>
    </location>
</feature>
<feature type="strand" evidence="8">
    <location>
        <begin position="247"/>
        <end position="251"/>
    </location>
</feature>
<feature type="helix" evidence="8">
    <location>
        <begin position="253"/>
        <end position="255"/>
    </location>
</feature>
<feature type="helix" evidence="8">
    <location>
        <begin position="256"/>
        <end position="263"/>
    </location>
</feature>
<feature type="turn" evidence="8">
    <location>
        <begin position="264"/>
        <end position="267"/>
    </location>
</feature>
<feature type="helix" evidence="8">
    <location>
        <begin position="273"/>
        <end position="285"/>
    </location>
</feature>
<feature type="helix" evidence="8">
    <location>
        <begin position="289"/>
        <end position="309"/>
    </location>
</feature>
<feature type="helix" evidence="8">
    <location>
        <begin position="312"/>
        <end position="316"/>
    </location>
</feature>
<feature type="helix" evidence="8">
    <location>
        <begin position="322"/>
        <end position="324"/>
    </location>
</feature>
<feature type="strand" evidence="8">
    <location>
        <begin position="327"/>
        <end position="334"/>
    </location>
</feature>
<feature type="helix" evidence="8">
    <location>
        <begin position="342"/>
        <end position="351"/>
    </location>
</feature>
<feature type="turn" evidence="8">
    <location>
        <begin position="368"/>
        <end position="370"/>
    </location>
</feature>
<feature type="strand" evidence="8">
    <location>
        <begin position="373"/>
        <end position="377"/>
    </location>
</feature>
<feature type="helix" evidence="8">
    <location>
        <begin position="379"/>
        <end position="384"/>
    </location>
</feature>
<feature type="helix" evidence="8">
    <location>
        <begin position="388"/>
        <end position="403"/>
    </location>
</feature>
<feature type="helix" evidence="8">
    <location>
        <begin position="405"/>
        <end position="407"/>
    </location>
</feature>
<feature type="helix" evidence="8">
    <location>
        <begin position="410"/>
        <end position="423"/>
    </location>
</feature>
<feature type="helix" evidence="8">
    <location>
        <begin position="430"/>
        <end position="432"/>
    </location>
</feature>
<proteinExistence type="evidence at protein level"/>
<gene>
    <name evidence="1" type="primary">glyA1</name>
    <name type="synonym">glyA</name>
    <name type="ordered locus">Rv1093</name>
    <name type="ORF">MTV017.46</name>
</gene>
<comment type="function">
    <text evidence="2">Catalyzes the reversible interconversion of serine and glycine with tetrahydrofolate (THF) serving as the one-carbon carrier. This reaction serves as the major source of one-carbon groups required for the biosynthesis of purines, thymidylate, methionine, and other important biomolecules. Also exhibits THF-independent aldolase activity toward beta-hydroxyamino acids, producing glycine and aldehydes, via a retro-aldol mechanism. Thus, is able to catalyze the cleavage of L-allo-threonine.</text>
</comment>
<comment type="catalytic activity">
    <reaction evidence="1 2">
        <text>(6R)-5,10-methylene-5,6,7,8-tetrahydrofolate + glycine + H2O = (6S)-5,6,7,8-tetrahydrofolate + L-serine</text>
        <dbReference type="Rhea" id="RHEA:15481"/>
        <dbReference type="ChEBI" id="CHEBI:15377"/>
        <dbReference type="ChEBI" id="CHEBI:15636"/>
        <dbReference type="ChEBI" id="CHEBI:33384"/>
        <dbReference type="ChEBI" id="CHEBI:57305"/>
        <dbReference type="ChEBI" id="CHEBI:57453"/>
        <dbReference type="EC" id="2.1.2.1"/>
    </reaction>
</comment>
<comment type="cofactor">
    <cofactor evidence="1 2">
        <name>pyridoxal 5'-phosphate</name>
        <dbReference type="ChEBI" id="CHEBI:597326"/>
    </cofactor>
    <text evidence="2">Binds 1 pyridoxal phosphate per homodimer. This is unusual in the SHMT family, that normally contains 1 pyridoxal phosphate per subunit.</text>
</comment>
<comment type="biophysicochemical properties">
    <phDependence>
        <text evidence="2">Optimum pH is about 7.8. Is completely inactive at pH below 4.0 and above 10.0.</text>
    </phDependence>
</comment>
<comment type="pathway">
    <text evidence="1">One-carbon metabolism; tetrahydrofolate interconversion.</text>
</comment>
<comment type="pathway">
    <text evidence="1">Amino-acid biosynthesis; glycine biosynthesis; glycine from L-serine: step 1/1.</text>
</comment>
<comment type="subunit">
    <text evidence="1 2 4">Homodimer.</text>
</comment>
<comment type="subcellular location">
    <subcellularLocation>
        <location evidence="1 7">Cytoplasm</location>
    </subcellularLocation>
</comment>
<comment type="similarity">
    <text evidence="1 6">Belongs to the SHMT family.</text>
</comment>
<comment type="sequence caution" evidence="3">
    <conflict type="erroneous initiation">
        <sequence resource="EMBL-CDS" id="CCP43846"/>
    </conflict>
    <text>Truncated N-terminus.</text>
</comment>